<sequence>MERLDKAALNALQPPEFRNENSLAATLKTLLFFTALMITVPIGLYFTTKAYIFEGALGMSNRDSYFYAAIVAVVAVHVVLALFVYVAWNEGSRQWREGKQD</sequence>
<reference key="1">
    <citation type="journal article" date="2006" name="BMC Genomics">
        <title>The systematic functional characterisation of Xq28 genes prioritises candidate disease genes.</title>
        <authorList>
            <person name="Kolb-Kokocinski A."/>
            <person name="Mehrle A."/>
            <person name="Bechtel S."/>
            <person name="Simpson J.C."/>
            <person name="Kioschis P."/>
            <person name="Wiemann S."/>
            <person name="Wellenreuther R."/>
            <person name="Poustka A."/>
        </authorList>
    </citation>
    <scope>NUCLEOTIDE SEQUENCE [MRNA] (ISOFORM 1)</scope>
    <source>
        <strain>NMRI</strain>
    </source>
</reference>
<reference key="2">
    <citation type="journal article" date="2005" name="Science">
        <title>The transcriptional landscape of the mammalian genome.</title>
        <authorList>
            <person name="Carninci P."/>
            <person name="Kasukawa T."/>
            <person name="Katayama S."/>
            <person name="Gough J."/>
            <person name="Frith M.C."/>
            <person name="Maeda N."/>
            <person name="Oyama R."/>
            <person name="Ravasi T."/>
            <person name="Lenhard B."/>
            <person name="Wells C."/>
            <person name="Kodzius R."/>
            <person name="Shimokawa K."/>
            <person name="Bajic V.B."/>
            <person name="Brenner S.E."/>
            <person name="Batalov S."/>
            <person name="Forrest A.R."/>
            <person name="Zavolan M."/>
            <person name="Davis M.J."/>
            <person name="Wilming L.G."/>
            <person name="Aidinis V."/>
            <person name="Allen J.E."/>
            <person name="Ambesi-Impiombato A."/>
            <person name="Apweiler R."/>
            <person name="Aturaliya R.N."/>
            <person name="Bailey T.L."/>
            <person name="Bansal M."/>
            <person name="Baxter L."/>
            <person name="Beisel K.W."/>
            <person name="Bersano T."/>
            <person name="Bono H."/>
            <person name="Chalk A.M."/>
            <person name="Chiu K.P."/>
            <person name="Choudhary V."/>
            <person name="Christoffels A."/>
            <person name="Clutterbuck D.R."/>
            <person name="Crowe M.L."/>
            <person name="Dalla E."/>
            <person name="Dalrymple B.P."/>
            <person name="de Bono B."/>
            <person name="Della Gatta G."/>
            <person name="di Bernardo D."/>
            <person name="Down T."/>
            <person name="Engstrom P."/>
            <person name="Fagiolini M."/>
            <person name="Faulkner G."/>
            <person name="Fletcher C.F."/>
            <person name="Fukushima T."/>
            <person name="Furuno M."/>
            <person name="Futaki S."/>
            <person name="Gariboldi M."/>
            <person name="Georgii-Hemming P."/>
            <person name="Gingeras T.R."/>
            <person name="Gojobori T."/>
            <person name="Green R.E."/>
            <person name="Gustincich S."/>
            <person name="Harbers M."/>
            <person name="Hayashi Y."/>
            <person name="Hensch T.K."/>
            <person name="Hirokawa N."/>
            <person name="Hill D."/>
            <person name="Huminiecki L."/>
            <person name="Iacono M."/>
            <person name="Ikeo K."/>
            <person name="Iwama A."/>
            <person name="Ishikawa T."/>
            <person name="Jakt M."/>
            <person name="Kanapin A."/>
            <person name="Katoh M."/>
            <person name="Kawasawa Y."/>
            <person name="Kelso J."/>
            <person name="Kitamura H."/>
            <person name="Kitano H."/>
            <person name="Kollias G."/>
            <person name="Krishnan S.P."/>
            <person name="Kruger A."/>
            <person name="Kummerfeld S.K."/>
            <person name="Kurochkin I.V."/>
            <person name="Lareau L.F."/>
            <person name="Lazarevic D."/>
            <person name="Lipovich L."/>
            <person name="Liu J."/>
            <person name="Liuni S."/>
            <person name="McWilliam S."/>
            <person name="Madan Babu M."/>
            <person name="Madera M."/>
            <person name="Marchionni L."/>
            <person name="Matsuda H."/>
            <person name="Matsuzawa S."/>
            <person name="Miki H."/>
            <person name="Mignone F."/>
            <person name="Miyake S."/>
            <person name="Morris K."/>
            <person name="Mottagui-Tabar S."/>
            <person name="Mulder N."/>
            <person name="Nakano N."/>
            <person name="Nakauchi H."/>
            <person name="Ng P."/>
            <person name="Nilsson R."/>
            <person name="Nishiguchi S."/>
            <person name="Nishikawa S."/>
            <person name="Nori F."/>
            <person name="Ohara O."/>
            <person name="Okazaki Y."/>
            <person name="Orlando V."/>
            <person name="Pang K.C."/>
            <person name="Pavan W.J."/>
            <person name="Pavesi G."/>
            <person name="Pesole G."/>
            <person name="Petrovsky N."/>
            <person name="Piazza S."/>
            <person name="Reed J."/>
            <person name="Reid J.F."/>
            <person name="Ring B.Z."/>
            <person name="Ringwald M."/>
            <person name="Rost B."/>
            <person name="Ruan Y."/>
            <person name="Salzberg S.L."/>
            <person name="Sandelin A."/>
            <person name="Schneider C."/>
            <person name="Schoenbach C."/>
            <person name="Sekiguchi K."/>
            <person name="Semple C.A."/>
            <person name="Seno S."/>
            <person name="Sessa L."/>
            <person name="Sheng Y."/>
            <person name="Shibata Y."/>
            <person name="Shimada H."/>
            <person name="Shimada K."/>
            <person name="Silva D."/>
            <person name="Sinclair B."/>
            <person name="Sperling S."/>
            <person name="Stupka E."/>
            <person name="Sugiura K."/>
            <person name="Sultana R."/>
            <person name="Takenaka Y."/>
            <person name="Taki K."/>
            <person name="Tammoja K."/>
            <person name="Tan S.L."/>
            <person name="Tang S."/>
            <person name="Taylor M.S."/>
            <person name="Tegner J."/>
            <person name="Teichmann S.A."/>
            <person name="Ueda H.R."/>
            <person name="van Nimwegen E."/>
            <person name="Verardo R."/>
            <person name="Wei C.L."/>
            <person name="Yagi K."/>
            <person name="Yamanishi H."/>
            <person name="Zabarovsky E."/>
            <person name="Zhu S."/>
            <person name="Zimmer A."/>
            <person name="Hide W."/>
            <person name="Bult C."/>
            <person name="Grimmond S.M."/>
            <person name="Teasdale R.D."/>
            <person name="Liu E.T."/>
            <person name="Brusic V."/>
            <person name="Quackenbush J."/>
            <person name="Wahlestedt C."/>
            <person name="Mattick J.S."/>
            <person name="Hume D.A."/>
            <person name="Kai C."/>
            <person name="Sasaki D."/>
            <person name="Tomaru Y."/>
            <person name="Fukuda S."/>
            <person name="Kanamori-Katayama M."/>
            <person name="Suzuki M."/>
            <person name="Aoki J."/>
            <person name="Arakawa T."/>
            <person name="Iida J."/>
            <person name="Imamura K."/>
            <person name="Itoh M."/>
            <person name="Kato T."/>
            <person name="Kawaji H."/>
            <person name="Kawagashira N."/>
            <person name="Kawashima T."/>
            <person name="Kojima M."/>
            <person name="Kondo S."/>
            <person name="Konno H."/>
            <person name="Nakano K."/>
            <person name="Ninomiya N."/>
            <person name="Nishio T."/>
            <person name="Okada M."/>
            <person name="Plessy C."/>
            <person name="Shibata K."/>
            <person name="Shiraki T."/>
            <person name="Suzuki S."/>
            <person name="Tagami M."/>
            <person name="Waki K."/>
            <person name="Watahiki A."/>
            <person name="Okamura-Oho Y."/>
            <person name="Suzuki H."/>
            <person name="Kawai J."/>
            <person name="Hayashizaki Y."/>
        </authorList>
    </citation>
    <scope>NUCLEOTIDE SEQUENCE [LARGE SCALE MRNA] (ISOFORMS 1 AND 2)</scope>
    <source>
        <strain>C57BL/6J</strain>
        <tissue>Embryo</tissue>
        <tissue>Embryonic stem cell</tissue>
        <tissue>Hippocampus</tissue>
        <tissue>Spinal cord</tissue>
    </source>
</reference>
<reference key="3">
    <citation type="journal article" date="2004" name="Genome Res.">
        <title>The status, quality, and expansion of the NIH full-length cDNA project: the Mammalian Gene Collection (MGC).</title>
        <authorList>
            <consortium name="The MGC Project Team"/>
        </authorList>
    </citation>
    <scope>NUCLEOTIDE SEQUENCE [LARGE SCALE MRNA] (ISOFORM 1)</scope>
    <source>
        <strain>C57BL/6J</strain>
        <tissue>Mammary tumor</tissue>
        <tissue>Thymus</tissue>
    </source>
</reference>
<reference key="4">
    <citation type="journal article" date="2010" name="Cell">
        <title>A tissue-specific atlas of mouse protein phosphorylation and expression.</title>
        <authorList>
            <person name="Huttlin E.L."/>
            <person name="Jedrychowski M.P."/>
            <person name="Elias J.E."/>
            <person name="Goswami T."/>
            <person name="Rad R."/>
            <person name="Beausoleil S.A."/>
            <person name="Villen J."/>
            <person name="Haas W."/>
            <person name="Sowa M.E."/>
            <person name="Gygi S.P."/>
        </authorList>
    </citation>
    <scope>IDENTIFICATION BY MASS SPECTROMETRY [LARGE SCALE ANALYSIS]</scope>
    <source>
        <tissue>Brain</tissue>
        <tissue>Brown adipose tissue</tissue>
        <tissue>Kidney</tissue>
        <tissue>Liver</tissue>
        <tissue>Lung</tissue>
        <tissue>Pancreas</tissue>
        <tissue>Testis</tissue>
    </source>
</reference>
<dbReference type="EMBL" id="AJ748652">
    <property type="protein sequence ID" value="CAG38686.1"/>
    <property type="molecule type" value="mRNA"/>
</dbReference>
<dbReference type="EMBL" id="AK049296">
    <property type="protein sequence ID" value="BAC33664.1"/>
    <property type="molecule type" value="mRNA"/>
</dbReference>
<dbReference type="EMBL" id="AK049488">
    <property type="protein sequence ID" value="BAC33774.1"/>
    <property type="molecule type" value="mRNA"/>
</dbReference>
<dbReference type="EMBL" id="AK164163">
    <property type="protein sequence ID" value="BAE37657.1"/>
    <property type="molecule type" value="mRNA"/>
</dbReference>
<dbReference type="EMBL" id="AK138582">
    <property type="protein sequence ID" value="BAE23704.1"/>
    <property type="molecule type" value="mRNA"/>
</dbReference>
<dbReference type="EMBL" id="BC028317">
    <property type="protein sequence ID" value="AAH28317.1"/>
    <property type="molecule type" value="mRNA"/>
</dbReference>
<dbReference type="EMBL" id="BC094639">
    <property type="protein sequence ID" value="AAH94639.1"/>
    <property type="molecule type" value="mRNA"/>
</dbReference>
<dbReference type="CCDS" id="CCDS41000.1">
    <molecule id="Q78T54-1"/>
</dbReference>
<dbReference type="RefSeq" id="NP_001074825.1">
    <molecule id="Q78T54-1"/>
    <property type="nucleotide sequence ID" value="NM_001081356.3"/>
</dbReference>
<dbReference type="RefSeq" id="NP_001277710.1">
    <property type="nucleotide sequence ID" value="NM_001290781.1"/>
</dbReference>
<dbReference type="SMR" id="Q78T54"/>
<dbReference type="BioGRID" id="211901">
    <property type="interactions" value="2"/>
</dbReference>
<dbReference type="FunCoup" id="Q78T54">
    <property type="interactions" value="2191"/>
</dbReference>
<dbReference type="STRING" id="10090.ENSMUSP00000110222"/>
<dbReference type="iPTMnet" id="Q78T54"/>
<dbReference type="PhosphoSitePlus" id="Q78T54"/>
<dbReference type="jPOST" id="Q78T54"/>
<dbReference type="PaxDb" id="10090-ENSMUSP00000110223"/>
<dbReference type="PeptideAtlas" id="Q78T54"/>
<dbReference type="ProteomicsDB" id="300171">
    <molecule id="Q78T54-1"/>
</dbReference>
<dbReference type="ProteomicsDB" id="300172">
    <molecule id="Q78T54-2"/>
</dbReference>
<dbReference type="Pumba" id="Q78T54"/>
<dbReference type="TopDownProteomics" id="Q78T54-1">
    <molecule id="Q78T54-1"/>
</dbReference>
<dbReference type="TopDownProteomics" id="Q78T54-2">
    <molecule id="Q78T54-2"/>
</dbReference>
<dbReference type="Antibodypedia" id="534">
    <property type="antibodies" value="81 antibodies from 22 providers"/>
</dbReference>
<dbReference type="Ensembl" id="ENSMUST00000114576.9">
    <molecule id="Q78T54-1"/>
    <property type="protein sequence ID" value="ENSMUSP00000110223.3"/>
    <property type="gene ID" value="ENSMUSG00000073131.13"/>
</dbReference>
<dbReference type="GeneID" id="67048"/>
<dbReference type="KEGG" id="mmu:67048"/>
<dbReference type="UCSC" id="uc009tkf.3">
    <molecule id="Q78T54-1"/>
    <property type="organism name" value="mouse"/>
</dbReference>
<dbReference type="AGR" id="MGI:1914298"/>
<dbReference type="CTD" id="203547"/>
<dbReference type="MGI" id="MGI:1914298">
    <property type="gene designation" value="Vma21"/>
</dbReference>
<dbReference type="VEuPathDB" id="HostDB:ENSMUSG00000073131"/>
<dbReference type="eggNOG" id="KOG4783">
    <property type="taxonomic scope" value="Eukaryota"/>
</dbReference>
<dbReference type="GeneTree" id="ENSGT00390000017980"/>
<dbReference type="HOGENOM" id="CLU_143588_1_0_1"/>
<dbReference type="InParanoid" id="Q78T54"/>
<dbReference type="OMA" id="PYFRGNE"/>
<dbReference type="TreeFam" id="TF314021"/>
<dbReference type="BioGRID-ORCS" id="67048">
    <property type="hits" value="12 hits in 56 CRISPR screens"/>
</dbReference>
<dbReference type="ChiTaRS" id="Vma21">
    <property type="organism name" value="mouse"/>
</dbReference>
<dbReference type="PRO" id="PR:Q78T54"/>
<dbReference type="Proteomes" id="UP000000589">
    <property type="component" value="Chromosome X"/>
</dbReference>
<dbReference type="RNAct" id="Q78T54">
    <property type="molecule type" value="protein"/>
</dbReference>
<dbReference type="Bgee" id="ENSMUSG00000073131">
    <property type="expression patterns" value="Expressed in otolith organ and 221 other cell types or tissues"/>
</dbReference>
<dbReference type="ExpressionAtlas" id="Q78T54">
    <property type="expression patterns" value="baseline and differential"/>
</dbReference>
<dbReference type="GO" id="GO:0005789">
    <property type="term" value="C:endoplasmic reticulum membrane"/>
    <property type="evidence" value="ECO:0007669"/>
    <property type="project" value="UniProtKB-SubCell"/>
</dbReference>
<dbReference type="GO" id="GO:0033116">
    <property type="term" value="C:endoplasmic reticulum-Golgi intermediate compartment membrane"/>
    <property type="evidence" value="ECO:0007669"/>
    <property type="project" value="UniProtKB-SubCell"/>
</dbReference>
<dbReference type="GO" id="GO:0012507">
    <property type="term" value="C:ER to Golgi transport vesicle membrane"/>
    <property type="evidence" value="ECO:0007669"/>
    <property type="project" value="UniProtKB-SubCell"/>
</dbReference>
<dbReference type="GO" id="GO:0005764">
    <property type="term" value="C:lysosome"/>
    <property type="evidence" value="ECO:0007669"/>
    <property type="project" value="Ensembl"/>
</dbReference>
<dbReference type="GO" id="GO:0070072">
    <property type="term" value="P:vacuolar proton-transporting V-type ATPase complex assembly"/>
    <property type="evidence" value="ECO:0007669"/>
    <property type="project" value="UniProtKB-UniRule"/>
</dbReference>
<dbReference type="HAMAP" id="MF_03058">
    <property type="entry name" value="VMA21"/>
    <property type="match status" value="1"/>
</dbReference>
<dbReference type="InterPro" id="IPR019013">
    <property type="entry name" value="Vma21"/>
</dbReference>
<dbReference type="PANTHER" id="PTHR31792">
    <property type="entry name" value="VACUOLAR ATPASE ASSEMBLY INTEGRAL MEMBRANE PROTEIN VMA21"/>
    <property type="match status" value="1"/>
</dbReference>
<dbReference type="PANTHER" id="PTHR31792:SF3">
    <property type="entry name" value="VACUOLAR ATPASE ASSEMBLY INTEGRAL MEMBRANE PROTEIN VMA21"/>
    <property type="match status" value="1"/>
</dbReference>
<dbReference type="Pfam" id="PF09446">
    <property type="entry name" value="VMA21"/>
    <property type="match status" value="1"/>
</dbReference>
<organism>
    <name type="scientific">Mus musculus</name>
    <name type="common">Mouse</name>
    <dbReference type="NCBI Taxonomy" id="10090"/>
    <lineage>
        <taxon>Eukaryota</taxon>
        <taxon>Metazoa</taxon>
        <taxon>Chordata</taxon>
        <taxon>Craniata</taxon>
        <taxon>Vertebrata</taxon>
        <taxon>Euteleostomi</taxon>
        <taxon>Mammalia</taxon>
        <taxon>Eutheria</taxon>
        <taxon>Euarchontoglires</taxon>
        <taxon>Glires</taxon>
        <taxon>Rodentia</taxon>
        <taxon>Myomorpha</taxon>
        <taxon>Muroidea</taxon>
        <taxon>Muridae</taxon>
        <taxon>Murinae</taxon>
        <taxon>Mus</taxon>
        <taxon>Mus</taxon>
    </lineage>
</organism>
<name>VMA21_MOUSE</name>
<evidence type="ECO:0000250" key="1">
    <source>
        <dbReference type="UniProtKB" id="Q3ZAQ7"/>
    </source>
</evidence>
<evidence type="ECO:0000255" key="2">
    <source>
        <dbReference type="HAMAP-Rule" id="MF_03058"/>
    </source>
</evidence>
<evidence type="ECO:0000303" key="3">
    <source>
    </source>
</evidence>
<proteinExistence type="evidence at protein level"/>
<accession>Q78T54</accession>
<accession>Q3UUC3</accession>
<feature type="chain" id="PRO_0000331500" description="Vacuolar ATPase assembly integral membrane protein Vma21">
    <location>
        <begin position="1"/>
        <end position="101"/>
    </location>
</feature>
<feature type="topological domain" description="Cytoplasmic" evidence="2">
    <location>
        <begin position="1"/>
        <end position="25"/>
    </location>
</feature>
<feature type="transmembrane region" description="Helical" evidence="2">
    <location>
        <begin position="26"/>
        <end position="46"/>
    </location>
</feature>
<feature type="topological domain" description="Lumenal" evidence="2">
    <location>
        <begin position="47"/>
        <end position="65"/>
    </location>
</feature>
<feature type="transmembrane region" description="Helical" evidence="2">
    <location>
        <begin position="66"/>
        <end position="86"/>
    </location>
</feature>
<feature type="topological domain" description="Cytoplasmic" evidence="2">
    <location>
        <begin position="87"/>
        <end position="101"/>
    </location>
</feature>
<feature type="splice variant" id="VSP_037464" description="In isoform 2." evidence="3">
    <original>GALGMSNRDSYFYAAIVAVVAVHVVLALFVYVAWNEGSRQWREGKQD</original>
    <variation>ALRTKASLIDTLQLSSGRKKISPFRALQL</variation>
    <location>
        <begin position="55"/>
        <end position="101"/>
    </location>
</feature>
<protein>
    <recommendedName>
        <fullName evidence="2">Vacuolar ATPase assembly integral membrane protein Vma21</fullName>
    </recommendedName>
</protein>
<comment type="function">
    <text evidence="2">Required for the assembly of the V0 complex of the vacuolar ATPase (V-ATPase) in the endoplasmic reticulum.</text>
</comment>
<comment type="subunit">
    <text evidence="1 2">Associates with the V0 complex of the vacuolar ATPase (V-ATPase) (By similarity). Interacts with ATP6AP2 (By similarity).</text>
</comment>
<comment type="subcellular location">
    <subcellularLocation>
        <location evidence="2">Endoplasmic reticulum membrane</location>
        <topology evidence="2">Multi-pass membrane protein</topology>
    </subcellularLocation>
    <subcellularLocation>
        <location evidence="2">Endoplasmic reticulum-Golgi intermediate compartment membrane</location>
        <topology evidence="2">Multi-pass membrane protein</topology>
    </subcellularLocation>
    <subcellularLocation>
        <location evidence="2">Cytoplasmic vesicle</location>
        <location evidence="2">COPII-coated vesicle membrane</location>
        <topology evidence="2">Multi-pass membrane protein</topology>
    </subcellularLocation>
</comment>
<comment type="alternative products">
    <event type="alternative splicing"/>
    <isoform>
        <id>Q78T54-1</id>
        <name>1</name>
        <sequence type="displayed"/>
    </isoform>
    <isoform>
        <id>Q78T54-2</id>
        <name>2</name>
        <sequence type="described" ref="VSP_037464"/>
    </isoform>
</comment>
<comment type="similarity">
    <text evidence="2">Belongs to the VMA21 family.</text>
</comment>
<keyword id="KW-0025">Alternative splicing</keyword>
<keyword id="KW-0968">Cytoplasmic vesicle</keyword>
<keyword id="KW-0256">Endoplasmic reticulum</keyword>
<keyword id="KW-0472">Membrane</keyword>
<keyword id="KW-1185">Reference proteome</keyword>
<keyword id="KW-0812">Transmembrane</keyword>
<keyword id="KW-1133">Transmembrane helix</keyword>
<gene>
    <name type="primary">Vma21</name>
</gene>